<dbReference type="EMBL" id="AK017244">
    <property type="protein sequence ID" value="BAB30648.1"/>
    <property type="molecule type" value="mRNA"/>
</dbReference>
<dbReference type="EMBL" id="AC123859">
    <property type="status" value="NOT_ANNOTATED_CDS"/>
    <property type="molecule type" value="Genomic_DNA"/>
</dbReference>
<dbReference type="CCDS" id="CCDS17582.1"/>
<dbReference type="RefSeq" id="NP_082038.2">
    <property type="nucleotide sequence ID" value="NM_027762.3"/>
</dbReference>
<dbReference type="SMR" id="Q9D3P1"/>
<dbReference type="BioGRID" id="214638">
    <property type="interactions" value="2"/>
</dbReference>
<dbReference type="FunCoup" id="Q9D3P1">
    <property type="interactions" value="21"/>
</dbReference>
<dbReference type="STRING" id="10090.ENSMUSP00000029516"/>
<dbReference type="GlyGen" id="Q9D3P1">
    <property type="glycosylation" value="1 site"/>
</dbReference>
<dbReference type="iPTMnet" id="Q9D3P1"/>
<dbReference type="PhosphoSitePlus" id="Q9D3P1"/>
<dbReference type="PaxDb" id="10090-ENSMUSP00000029516"/>
<dbReference type="ProteomicsDB" id="263090"/>
<dbReference type="Antibodypedia" id="34081">
    <property type="antibodies" value="108 antibodies from 24 providers"/>
</dbReference>
<dbReference type="DNASU" id="71325"/>
<dbReference type="Ensembl" id="ENSMUST00000029516.3">
    <property type="protein sequence ID" value="ENSMUSP00000029516.3"/>
    <property type="gene ID" value="ENSMUSG00000027908.3"/>
</dbReference>
<dbReference type="GeneID" id="71325"/>
<dbReference type="KEGG" id="mmu:71325"/>
<dbReference type="UCSC" id="uc008qfi.1">
    <property type="organism name" value="mouse"/>
</dbReference>
<dbReference type="AGR" id="MGI:1918575"/>
<dbReference type="CTD" id="126637"/>
<dbReference type="MGI" id="MGI:1918575">
    <property type="gene designation" value="Tchhl1"/>
</dbReference>
<dbReference type="VEuPathDB" id="HostDB:ENSMUSG00000027908"/>
<dbReference type="eggNOG" id="ENOG502RU01">
    <property type="taxonomic scope" value="Eukaryota"/>
</dbReference>
<dbReference type="GeneTree" id="ENSGT00940000162966"/>
<dbReference type="HOGENOM" id="CLU_017117_1_0_1"/>
<dbReference type="InParanoid" id="Q9D3P1"/>
<dbReference type="OMA" id="REAKTHN"/>
<dbReference type="OrthoDB" id="9450604at2759"/>
<dbReference type="TreeFam" id="TF337503"/>
<dbReference type="BioGRID-ORCS" id="71325">
    <property type="hits" value="2 hits in 76 CRISPR screens"/>
</dbReference>
<dbReference type="PRO" id="PR:Q9D3P1"/>
<dbReference type="Proteomes" id="UP000000589">
    <property type="component" value="Chromosome 3"/>
</dbReference>
<dbReference type="RNAct" id="Q9D3P1">
    <property type="molecule type" value="protein"/>
</dbReference>
<dbReference type="Bgee" id="ENSMUSG00000027908">
    <property type="expression patterns" value="Expressed in lip and 24 other cell types or tissues"/>
</dbReference>
<dbReference type="GO" id="GO:0005509">
    <property type="term" value="F:calcium ion binding"/>
    <property type="evidence" value="ECO:0007669"/>
    <property type="project" value="InterPro"/>
</dbReference>
<dbReference type="GO" id="GO:0046914">
    <property type="term" value="F:transition metal ion binding"/>
    <property type="evidence" value="ECO:0007669"/>
    <property type="project" value="InterPro"/>
</dbReference>
<dbReference type="CDD" id="cd00213">
    <property type="entry name" value="S-100"/>
    <property type="match status" value="1"/>
</dbReference>
<dbReference type="Gene3D" id="1.10.238.10">
    <property type="entry name" value="EF-hand"/>
    <property type="match status" value="1"/>
</dbReference>
<dbReference type="InterPro" id="IPR011992">
    <property type="entry name" value="EF-hand-dom_pair"/>
</dbReference>
<dbReference type="InterPro" id="IPR002048">
    <property type="entry name" value="EF_hand_dom"/>
</dbReference>
<dbReference type="InterPro" id="IPR034325">
    <property type="entry name" value="S-100_dom"/>
</dbReference>
<dbReference type="InterPro" id="IPR013787">
    <property type="entry name" value="S100_Ca-bd_sub"/>
</dbReference>
<dbReference type="InterPro" id="IPR042937">
    <property type="entry name" value="TCHHL1"/>
</dbReference>
<dbReference type="PANTHER" id="PTHR47612">
    <property type="entry name" value="TRICHOHYALIN-LIKE PROTEIN 1"/>
    <property type="match status" value="1"/>
</dbReference>
<dbReference type="PANTHER" id="PTHR47612:SF1">
    <property type="entry name" value="TRICHOHYALIN-LIKE PROTEIN 1"/>
    <property type="match status" value="1"/>
</dbReference>
<dbReference type="Pfam" id="PF01023">
    <property type="entry name" value="S_100"/>
    <property type="match status" value="1"/>
</dbReference>
<dbReference type="SMART" id="SM01394">
    <property type="entry name" value="S_100"/>
    <property type="match status" value="1"/>
</dbReference>
<dbReference type="SUPFAM" id="SSF47473">
    <property type="entry name" value="EF-hand"/>
    <property type="match status" value="1"/>
</dbReference>
<dbReference type="PROSITE" id="PS50222">
    <property type="entry name" value="EF_HAND_2"/>
    <property type="match status" value="1"/>
</dbReference>
<accession>Q9D3P1</accession>
<accession>F8VQ46</accession>
<keyword id="KW-1185">Reference proteome</keyword>
<proteinExistence type="evidence at transcript level"/>
<evidence type="ECO:0000255" key="1">
    <source>
        <dbReference type="PROSITE-ProRule" id="PRU00448"/>
    </source>
</evidence>
<evidence type="ECO:0000256" key="2">
    <source>
        <dbReference type="SAM" id="MobiDB-lite"/>
    </source>
</evidence>
<evidence type="ECO:0000305" key="3"/>
<sequence length="638" mass="70707">MPRLLRGVFCVVEIFHKYAIEDGGNQATLTRTELRQLLEGEIGDFLQPHVFHAVERKLNLLNFDRDGTISFEEFVLAIFSLLNPSYFDISLLNSEPRLMSKSEKIDAVDLGAIGGNIQQVVGVGPTQERLIFPSEMASSGQPSNEEGEVGDEPMVSPCEDIKTHSLPRNVSEPNDPENQQPKEDAQEVAQNVPATEYDGVQFKRNTVVEVPKQSTSPTQEIPRERSKPSRRLSDTKISDHMIQRPTEDEEHTSTTQDPFLQKRDKATGSENTDLSVVAATRKSSQTQEIFEPMDDTKLSEAQETGKDAGRIPPETNLEEPKADAKVAESHGLPAQEREHNTRDQSVQSRSRNVSETSSRGEQEGEWKEHERITLSPTADAETQDEKCQEFPGSWRENDAKKDSAAKDPSSEEGNQNLPEIKEDSVSGKEARHSEEDTVYAFEINKNSPAAEETLETRERSQELAPLEKQSQRKKHRATRIQDKPVRKEDHNEGEDSELSLTQSDEGFCEIPNSLAPEVGKSSSEIAEPHVPEDSQSQIDHHGDAKQESHTNNPDPQKQGAPGESSREQEAVVLSIQEDGQLPEGQEQSARDGLHDGLSSRTKGGPGAAVEPSEGEEVQEATAGRENRKALEAESLEAQ</sequence>
<name>TCHL1_MOUSE</name>
<protein>
    <recommendedName>
        <fullName>Trichohyalin-like protein 1</fullName>
    </recommendedName>
</protein>
<feature type="chain" id="PRO_0000341544" description="Trichohyalin-like protein 1">
    <location>
        <begin position="1"/>
        <end position="638"/>
    </location>
</feature>
<feature type="domain" description="EF-hand" evidence="1">
    <location>
        <begin position="49"/>
        <end position="84"/>
    </location>
</feature>
<feature type="region of interest" description="Disordered" evidence="2">
    <location>
        <begin position="134"/>
        <end position="638"/>
    </location>
</feature>
<feature type="compositionally biased region" description="Polar residues" evidence="2">
    <location>
        <begin position="166"/>
        <end position="179"/>
    </location>
</feature>
<feature type="compositionally biased region" description="Basic and acidic residues" evidence="2">
    <location>
        <begin position="221"/>
        <end position="246"/>
    </location>
</feature>
<feature type="compositionally biased region" description="Basic and acidic residues" evidence="2">
    <location>
        <begin position="294"/>
        <end position="309"/>
    </location>
</feature>
<feature type="compositionally biased region" description="Basic and acidic residues" evidence="2">
    <location>
        <begin position="318"/>
        <end position="328"/>
    </location>
</feature>
<feature type="compositionally biased region" description="Polar residues" evidence="2">
    <location>
        <begin position="343"/>
        <end position="357"/>
    </location>
</feature>
<feature type="compositionally biased region" description="Basic and acidic residues" evidence="2">
    <location>
        <begin position="358"/>
        <end position="372"/>
    </location>
</feature>
<feature type="compositionally biased region" description="Basic and acidic residues" evidence="2">
    <location>
        <begin position="395"/>
        <end position="409"/>
    </location>
</feature>
<feature type="compositionally biased region" description="Basic and acidic residues" evidence="2">
    <location>
        <begin position="419"/>
        <end position="435"/>
    </location>
</feature>
<feature type="compositionally biased region" description="Basic and acidic residues" evidence="2">
    <location>
        <begin position="479"/>
        <end position="490"/>
    </location>
</feature>
<feature type="compositionally biased region" description="Basic and acidic residues" evidence="2">
    <location>
        <begin position="526"/>
        <end position="548"/>
    </location>
</feature>
<feature type="compositionally biased region" description="Basic and acidic residues" evidence="2">
    <location>
        <begin position="622"/>
        <end position="631"/>
    </location>
</feature>
<feature type="sequence conflict" description="In Ref. 1; BAB30648." evidence="3" ref="1">
    <original>G</original>
    <variation>V</variation>
    <location>
        <position position="24"/>
    </location>
</feature>
<feature type="sequence conflict" description="In Ref. 1; BAB30648." evidence="3" ref="1">
    <original>K</original>
    <variation>Q</variation>
    <location>
        <position position="321"/>
    </location>
</feature>
<organism>
    <name type="scientific">Mus musculus</name>
    <name type="common">Mouse</name>
    <dbReference type="NCBI Taxonomy" id="10090"/>
    <lineage>
        <taxon>Eukaryota</taxon>
        <taxon>Metazoa</taxon>
        <taxon>Chordata</taxon>
        <taxon>Craniata</taxon>
        <taxon>Vertebrata</taxon>
        <taxon>Euteleostomi</taxon>
        <taxon>Mammalia</taxon>
        <taxon>Eutheria</taxon>
        <taxon>Euarchontoglires</taxon>
        <taxon>Glires</taxon>
        <taxon>Rodentia</taxon>
        <taxon>Myomorpha</taxon>
        <taxon>Muroidea</taxon>
        <taxon>Muridae</taxon>
        <taxon>Murinae</taxon>
        <taxon>Mus</taxon>
        <taxon>Mus</taxon>
    </lineage>
</organism>
<comment type="similarity">
    <text evidence="3">Belongs to the S-100 family.</text>
</comment>
<reference key="1">
    <citation type="journal article" date="2005" name="Science">
        <title>The transcriptional landscape of the mammalian genome.</title>
        <authorList>
            <person name="Carninci P."/>
            <person name="Kasukawa T."/>
            <person name="Katayama S."/>
            <person name="Gough J."/>
            <person name="Frith M.C."/>
            <person name="Maeda N."/>
            <person name="Oyama R."/>
            <person name="Ravasi T."/>
            <person name="Lenhard B."/>
            <person name="Wells C."/>
            <person name="Kodzius R."/>
            <person name="Shimokawa K."/>
            <person name="Bajic V.B."/>
            <person name="Brenner S.E."/>
            <person name="Batalov S."/>
            <person name="Forrest A.R."/>
            <person name="Zavolan M."/>
            <person name="Davis M.J."/>
            <person name="Wilming L.G."/>
            <person name="Aidinis V."/>
            <person name="Allen J.E."/>
            <person name="Ambesi-Impiombato A."/>
            <person name="Apweiler R."/>
            <person name="Aturaliya R.N."/>
            <person name="Bailey T.L."/>
            <person name="Bansal M."/>
            <person name="Baxter L."/>
            <person name="Beisel K.W."/>
            <person name="Bersano T."/>
            <person name="Bono H."/>
            <person name="Chalk A.M."/>
            <person name="Chiu K.P."/>
            <person name="Choudhary V."/>
            <person name="Christoffels A."/>
            <person name="Clutterbuck D.R."/>
            <person name="Crowe M.L."/>
            <person name="Dalla E."/>
            <person name="Dalrymple B.P."/>
            <person name="de Bono B."/>
            <person name="Della Gatta G."/>
            <person name="di Bernardo D."/>
            <person name="Down T."/>
            <person name="Engstrom P."/>
            <person name="Fagiolini M."/>
            <person name="Faulkner G."/>
            <person name="Fletcher C.F."/>
            <person name="Fukushima T."/>
            <person name="Furuno M."/>
            <person name="Futaki S."/>
            <person name="Gariboldi M."/>
            <person name="Georgii-Hemming P."/>
            <person name="Gingeras T.R."/>
            <person name="Gojobori T."/>
            <person name="Green R.E."/>
            <person name="Gustincich S."/>
            <person name="Harbers M."/>
            <person name="Hayashi Y."/>
            <person name="Hensch T.K."/>
            <person name="Hirokawa N."/>
            <person name="Hill D."/>
            <person name="Huminiecki L."/>
            <person name="Iacono M."/>
            <person name="Ikeo K."/>
            <person name="Iwama A."/>
            <person name="Ishikawa T."/>
            <person name="Jakt M."/>
            <person name="Kanapin A."/>
            <person name="Katoh M."/>
            <person name="Kawasawa Y."/>
            <person name="Kelso J."/>
            <person name="Kitamura H."/>
            <person name="Kitano H."/>
            <person name="Kollias G."/>
            <person name="Krishnan S.P."/>
            <person name="Kruger A."/>
            <person name="Kummerfeld S.K."/>
            <person name="Kurochkin I.V."/>
            <person name="Lareau L.F."/>
            <person name="Lazarevic D."/>
            <person name="Lipovich L."/>
            <person name="Liu J."/>
            <person name="Liuni S."/>
            <person name="McWilliam S."/>
            <person name="Madan Babu M."/>
            <person name="Madera M."/>
            <person name="Marchionni L."/>
            <person name="Matsuda H."/>
            <person name="Matsuzawa S."/>
            <person name="Miki H."/>
            <person name="Mignone F."/>
            <person name="Miyake S."/>
            <person name="Morris K."/>
            <person name="Mottagui-Tabar S."/>
            <person name="Mulder N."/>
            <person name="Nakano N."/>
            <person name="Nakauchi H."/>
            <person name="Ng P."/>
            <person name="Nilsson R."/>
            <person name="Nishiguchi S."/>
            <person name="Nishikawa S."/>
            <person name="Nori F."/>
            <person name="Ohara O."/>
            <person name="Okazaki Y."/>
            <person name="Orlando V."/>
            <person name="Pang K.C."/>
            <person name="Pavan W.J."/>
            <person name="Pavesi G."/>
            <person name="Pesole G."/>
            <person name="Petrovsky N."/>
            <person name="Piazza S."/>
            <person name="Reed J."/>
            <person name="Reid J.F."/>
            <person name="Ring B.Z."/>
            <person name="Ringwald M."/>
            <person name="Rost B."/>
            <person name="Ruan Y."/>
            <person name="Salzberg S.L."/>
            <person name="Sandelin A."/>
            <person name="Schneider C."/>
            <person name="Schoenbach C."/>
            <person name="Sekiguchi K."/>
            <person name="Semple C.A."/>
            <person name="Seno S."/>
            <person name="Sessa L."/>
            <person name="Sheng Y."/>
            <person name="Shibata Y."/>
            <person name="Shimada H."/>
            <person name="Shimada K."/>
            <person name="Silva D."/>
            <person name="Sinclair B."/>
            <person name="Sperling S."/>
            <person name="Stupka E."/>
            <person name="Sugiura K."/>
            <person name="Sultana R."/>
            <person name="Takenaka Y."/>
            <person name="Taki K."/>
            <person name="Tammoja K."/>
            <person name="Tan S.L."/>
            <person name="Tang S."/>
            <person name="Taylor M.S."/>
            <person name="Tegner J."/>
            <person name="Teichmann S.A."/>
            <person name="Ueda H.R."/>
            <person name="van Nimwegen E."/>
            <person name="Verardo R."/>
            <person name="Wei C.L."/>
            <person name="Yagi K."/>
            <person name="Yamanishi H."/>
            <person name="Zabarovsky E."/>
            <person name="Zhu S."/>
            <person name="Zimmer A."/>
            <person name="Hide W."/>
            <person name="Bult C."/>
            <person name="Grimmond S.M."/>
            <person name="Teasdale R.D."/>
            <person name="Liu E.T."/>
            <person name="Brusic V."/>
            <person name="Quackenbush J."/>
            <person name="Wahlestedt C."/>
            <person name="Mattick J.S."/>
            <person name="Hume D.A."/>
            <person name="Kai C."/>
            <person name="Sasaki D."/>
            <person name="Tomaru Y."/>
            <person name="Fukuda S."/>
            <person name="Kanamori-Katayama M."/>
            <person name="Suzuki M."/>
            <person name="Aoki J."/>
            <person name="Arakawa T."/>
            <person name="Iida J."/>
            <person name="Imamura K."/>
            <person name="Itoh M."/>
            <person name="Kato T."/>
            <person name="Kawaji H."/>
            <person name="Kawagashira N."/>
            <person name="Kawashima T."/>
            <person name="Kojima M."/>
            <person name="Kondo S."/>
            <person name="Konno H."/>
            <person name="Nakano K."/>
            <person name="Ninomiya N."/>
            <person name="Nishio T."/>
            <person name="Okada M."/>
            <person name="Plessy C."/>
            <person name="Shibata K."/>
            <person name="Shiraki T."/>
            <person name="Suzuki S."/>
            <person name="Tagami M."/>
            <person name="Waki K."/>
            <person name="Watahiki A."/>
            <person name="Okamura-Oho Y."/>
            <person name="Suzuki H."/>
            <person name="Kawai J."/>
            <person name="Hayashizaki Y."/>
        </authorList>
    </citation>
    <scope>NUCLEOTIDE SEQUENCE [LARGE SCALE MRNA]</scope>
    <source>
        <strain>C57BL/6J</strain>
        <tissue>Head</tissue>
    </source>
</reference>
<reference key="2">
    <citation type="journal article" date="2009" name="PLoS Biol.">
        <title>Lineage-specific biology revealed by a finished genome assembly of the mouse.</title>
        <authorList>
            <person name="Church D.M."/>
            <person name="Goodstadt L."/>
            <person name="Hillier L.W."/>
            <person name="Zody M.C."/>
            <person name="Goldstein S."/>
            <person name="She X."/>
            <person name="Bult C.J."/>
            <person name="Agarwala R."/>
            <person name="Cherry J.L."/>
            <person name="DiCuccio M."/>
            <person name="Hlavina W."/>
            <person name="Kapustin Y."/>
            <person name="Meric P."/>
            <person name="Maglott D."/>
            <person name="Birtle Z."/>
            <person name="Marques A.C."/>
            <person name="Graves T."/>
            <person name="Zhou S."/>
            <person name="Teague B."/>
            <person name="Potamousis K."/>
            <person name="Churas C."/>
            <person name="Place M."/>
            <person name="Herschleb J."/>
            <person name="Runnheim R."/>
            <person name="Forrest D."/>
            <person name="Amos-Landgraf J."/>
            <person name="Schwartz D.C."/>
            <person name="Cheng Z."/>
            <person name="Lindblad-Toh K."/>
            <person name="Eichler E.E."/>
            <person name="Ponting C.P."/>
        </authorList>
    </citation>
    <scope>NUCLEOTIDE SEQUENCE [LARGE SCALE GENOMIC DNA]</scope>
    <source>
        <strain>C57BL/6J</strain>
    </source>
</reference>
<gene>
    <name type="primary">Tchhl1</name>
</gene>